<evidence type="ECO:0000255" key="1">
    <source>
        <dbReference type="HAMAP-Rule" id="MF_01169"/>
    </source>
</evidence>
<evidence type="ECO:0000305" key="2"/>
<comment type="function">
    <text evidence="1">E1 component of the 2-oxoglutarate dehydrogenase (OGDH) complex which catalyzes the decarboxylation of 2-oxoglutarate, the first step in the conversion of 2-oxoglutarate to succinyl-CoA and CO(2).</text>
</comment>
<comment type="catalytic activity">
    <reaction evidence="1">
        <text>N(6)-[(R)-lipoyl]-L-lysyl-[protein] + 2-oxoglutarate + H(+) = N(6)-[(R)-S(8)-succinyldihydrolipoyl]-L-lysyl-[protein] + CO2</text>
        <dbReference type="Rhea" id="RHEA:12188"/>
        <dbReference type="Rhea" id="RHEA-COMP:10474"/>
        <dbReference type="Rhea" id="RHEA-COMP:20092"/>
        <dbReference type="ChEBI" id="CHEBI:15378"/>
        <dbReference type="ChEBI" id="CHEBI:16526"/>
        <dbReference type="ChEBI" id="CHEBI:16810"/>
        <dbReference type="ChEBI" id="CHEBI:83099"/>
        <dbReference type="ChEBI" id="CHEBI:83120"/>
        <dbReference type="EC" id="1.2.4.2"/>
    </reaction>
</comment>
<comment type="cofactor">
    <cofactor evidence="1">
        <name>thiamine diphosphate</name>
        <dbReference type="ChEBI" id="CHEBI:58937"/>
    </cofactor>
</comment>
<comment type="subunit">
    <text evidence="1">Homodimer. Part of the 2-oxoglutarate dehydrogenase (OGDH) complex composed of E1 (2-oxoglutarate dehydrogenase), E2 (dihydrolipoamide succinyltransferase) and E3 (dihydrolipoamide dehydrogenase); the complex contains multiple copies of the three enzymatic components (E1, E2 and E3).</text>
</comment>
<comment type="similarity">
    <text evidence="1">Belongs to the alpha-ketoglutarate dehydrogenase family.</text>
</comment>
<reference key="1">
    <citation type="submission" date="2003-05" db="EMBL/GenBank/DDBJ databases">
        <title>Genetic analysis of seventeen genes in Staphylococcus aureus with reduced susceptibility to vancomycin (VRSA) and hetero-VRSA (hVRSA).</title>
        <authorList>
            <person name="Wootton M."/>
            <person name="Avison M.B."/>
            <person name="Bennett P.M."/>
            <person name="Howe R.A."/>
            <person name="MacGowan A.P."/>
            <person name="Walsh T.R."/>
        </authorList>
    </citation>
    <scope>NUCLEOTIDE SEQUENCE [GENOMIC DNA]</scope>
</reference>
<reference key="2">
    <citation type="journal article" date="2008" name="Antimicrob. Agents Chemother.">
        <title>Mutated response regulator graR is responsible for phenotypic conversion of Staphylococcus aureus from heterogeneous vancomycin-intermediate resistance to vancomycin-intermediate resistance.</title>
        <authorList>
            <person name="Neoh H.-M."/>
            <person name="Cui L."/>
            <person name="Yuzawa H."/>
            <person name="Takeuchi F."/>
            <person name="Matsuo M."/>
            <person name="Hiramatsu K."/>
        </authorList>
    </citation>
    <scope>NUCLEOTIDE SEQUENCE [LARGE SCALE GENOMIC DNA]</scope>
    <source>
        <strain>Mu3 / ATCC 700698</strain>
    </source>
</reference>
<sequence length="932" mass="105357">MTNERKEVSEAPVNFGANLGLMLDLYDDFLQDPSSVPEDLQVLFSTIKNDDSIVPALKSTSSQNSDGTIKRVMRLIDNIRQYGHLKADIYPVNPPKRKHVPKLEIEDFDLDQQTLEGISAGIVSDHFADIYDNAYEAILRMEKRYKGPIAFEYTHINNNTERGWLKRRIETPYKVTLNNNEKRALFKQLAYVEGFEKYLHKNFVGAKRFSIEGVDALVPMLQRTITIAAKEGIKNIQIGMAHRGRLNVLTHVLEKPYEMMISEFMHTDPMKFLPEDGSLQLTAGWTGDVKYHLGGIKTTDSYGTMQRIALANNPSHLEIVAPVVEGRTRAAQDDTQRAGAPTTDHHKAMPIIIHGDAAYPGQGINFETMNLGNLKGYSTGGSLHIITNNRIGFTTEPIDARSTTYSTDVAKGYDVPIFHVNADDVEATIEAIDIAMEFRKEFHKDVVIDLVGYRRFGHNEMDEPSITNPVPYQNIRKHDSVEYVFGKKLVNEGVISEDEMHSFIEQVQKELRQAHDKINKADKMDNPDMEKPAELALPLQADEQSFTFDHLKEINDALLTYPDGFNILKKLNKVLEKRHEPFNKEDGLVDWAQAEQLAFATILQDGTPIRLTGQDSERGTFSHRHAVLHDEQTGETYTPLHHVPDQKATFDIHNSPLSEAAVVGFEYGYNVENKKSFNIWEAQYGDFANMSQMIFDNFLFSSRSKWGERSGLTLFLPHAYEGQGPEHSSARLERFLQLAAENNCTVVNLSSSSNYFHLLRAQAASLDSEQMRPLVVMSPKSLLRNKTVAKPIDEFTSGGFEPILTESYQADKVTKVILATGKMFIDLKEALAKNPDESVLLVAIERLYPFPEEEIEALLAQLPNLEEVSWVQEEPKNQGAWLYVYPYVKVLVADKYDLSYHGRIQRAAPAEGDGEIHKLVQNKIIENALKNN</sequence>
<proteinExistence type="inferred from homology"/>
<feature type="chain" id="PRO_0000313016" description="2-oxoglutarate dehydrogenase E1 component">
    <location>
        <begin position="1"/>
        <end position="932"/>
    </location>
</feature>
<feature type="sequence conflict" description="In Ref. 1; CAD92197." evidence="2" ref="1">
    <original>T</original>
    <variation>I</variation>
    <location>
        <position position="46"/>
    </location>
</feature>
<feature type="sequence conflict" description="In Ref. 1; CAD92197." evidence="2" ref="1">
    <original>N</original>
    <variation>K</variation>
    <location>
        <position position="864"/>
    </location>
</feature>
<gene>
    <name evidence="1" type="primary">odhA</name>
    <name type="ordered locus">SAHV_1401</name>
</gene>
<protein>
    <recommendedName>
        <fullName evidence="1">2-oxoglutarate dehydrogenase E1 component</fullName>
        <ecNumber evidence="1">1.2.4.2</ecNumber>
    </recommendedName>
    <alternativeName>
        <fullName evidence="1">Alpha-ketoglutarate dehydrogenase</fullName>
    </alternativeName>
</protein>
<name>ODO1_STAA1</name>
<accession>A7X295</accession>
<accession>Q7ASB7</accession>
<accession>Q7WRM3</accession>
<accession>Q7WRN1</accession>
<accession>Q7WRX0</accession>
<accession>Q7WZ40</accession>
<dbReference type="EC" id="1.2.4.2" evidence="1"/>
<dbReference type="EMBL" id="AJ564530">
    <property type="protein sequence ID" value="CAD92197.1"/>
    <property type="molecule type" value="Genomic_DNA"/>
</dbReference>
<dbReference type="EMBL" id="AP009324">
    <property type="protein sequence ID" value="BAF78284.1"/>
    <property type="molecule type" value="Genomic_DNA"/>
</dbReference>
<dbReference type="RefSeq" id="WP_000180673.1">
    <property type="nucleotide sequence ID" value="NC_009782.1"/>
</dbReference>
<dbReference type="SMR" id="A7X295"/>
<dbReference type="KEGG" id="saw:SAHV_1401"/>
<dbReference type="HOGENOM" id="CLU_004709_1_0_9"/>
<dbReference type="GO" id="GO:0005829">
    <property type="term" value="C:cytosol"/>
    <property type="evidence" value="ECO:0007669"/>
    <property type="project" value="TreeGrafter"/>
</dbReference>
<dbReference type="GO" id="GO:0045252">
    <property type="term" value="C:oxoglutarate dehydrogenase complex"/>
    <property type="evidence" value="ECO:0007669"/>
    <property type="project" value="TreeGrafter"/>
</dbReference>
<dbReference type="GO" id="GO:0004591">
    <property type="term" value="F:oxoglutarate dehydrogenase (succinyl-transferring) activity"/>
    <property type="evidence" value="ECO:0007669"/>
    <property type="project" value="UniProtKB-UniRule"/>
</dbReference>
<dbReference type="GO" id="GO:0030976">
    <property type="term" value="F:thiamine pyrophosphate binding"/>
    <property type="evidence" value="ECO:0007669"/>
    <property type="project" value="UniProtKB-UniRule"/>
</dbReference>
<dbReference type="GO" id="GO:0006096">
    <property type="term" value="P:glycolytic process"/>
    <property type="evidence" value="ECO:0007669"/>
    <property type="project" value="UniProtKB-UniRule"/>
</dbReference>
<dbReference type="GO" id="GO:0006099">
    <property type="term" value="P:tricarboxylic acid cycle"/>
    <property type="evidence" value="ECO:0007669"/>
    <property type="project" value="TreeGrafter"/>
</dbReference>
<dbReference type="CDD" id="cd02016">
    <property type="entry name" value="TPP_E1_OGDC_like"/>
    <property type="match status" value="1"/>
</dbReference>
<dbReference type="FunFam" id="3.40.50.11610:FF:000002">
    <property type="entry name" value="2-oxoglutarate dehydrogenase E1 component"/>
    <property type="match status" value="1"/>
</dbReference>
<dbReference type="FunFam" id="3.40.50.970:FF:000036">
    <property type="entry name" value="2-oxoglutarate dehydrogenase E1 component"/>
    <property type="match status" value="1"/>
</dbReference>
<dbReference type="Gene3D" id="3.40.50.12470">
    <property type="match status" value="1"/>
</dbReference>
<dbReference type="Gene3D" id="3.40.50.970">
    <property type="match status" value="1"/>
</dbReference>
<dbReference type="Gene3D" id="3.40.50.11610">
    <property type="entry name" value="Multifunctional 2-oxoglutarate metabolism enzyme, C-terminal domain"/>
    <property type="match status" value="1"/>
</dbReference>
<dbReference type="Gene3D" id="1.10.287.1150">
    <property type="entry name" value="TPP helical domain"/>
    <property type="match status" value="1"/>
</dbReference>
<dbReference type="HAMAP" id="MF_01169">
    <property type="entry name" value="SucA_OdhA"/>
    <property type="match status" value="1"/>
</dbReference>
<dbReference type="InterPro" id="IPR011603">
    <property type="entry name" value="2oxoglutarate_DH_E1"/>
</dbReference>
<dbReference type="InterPro" id="IPR023784">
    <property type="entry name" value="2oxoglutarate_DH_E1_bac"/>
</dbReference>
<dbReference type="InterPro" id="IPR001017">
    <property type="entry name" value="DH_E1"/>
</dbReference>
<dbReference type="InterPro" id="IPR042179">
    <property type="entry name" value="KGD_C_sf"/>
</dbReference>
<dbReference type="InterPro" id="IPR031717">
    <property type="entry name" value="ODO-1/KGD_C"/>
</dbReference>
<dbReference type="InterPro" id="IPR029061">
    <property type="entry name" value="THDP-binding"/>
</dbReference>
<dbReference type="InterPro" id="IPR005475">
    <property type="entry name" value="Transketolase-like_Pyr-bd"/>
</dbReference>
<dbReference type="NCBIfam" id="TIGR00239">
    <property type="entry name" value="2oxo_dh_E1"/>
    <property type="match status" value="1"/>
</dbReference>
<dbReference type="NCBIfam" id="NF006914">
    <property type="entry name" value="PRK09404.1"/>
    <property type="match status" value="1"/>
</dbReference>
<dbReference type="NCBIfam" id="NF008907">
    <property type="entry name" value="PRK12270.1"/>
    <property type="match status" value="1"/>
</dbReference>
<dbReference type="PANTHER" id="PTHR23152:SF4">
    <property type="entry name" value="2-OXOADIPATE DEHYDROGENASE COMPLEX COMPONENT E1"/>
    <property type="match status" value="1"/>
</dbReference>
<dbReference type="PANTHER" id="PTHR23152">
    <property type="entry name" value="2-OXOGLUTARATE DEHYDROGENASE"/>
    <property type="match status" value="1"/>
</dbReference>
<dbReference type="Pfam" id="PF00676">
    <property type="entry name" value="E1_dh"/>
    <property type="match status" value="1"/>
</dbReference>
<dbReference type="Pfam" id="PF16870">
    <property type="entry name" value="OxoGdeHyase_C"/>
    <property type="match status" value="1"/>
</dbReference>
<dbReference type="Pfam" id="PF02779">
    <property type="entry name" value="Transket_pyr"/>
    <property type="match status" value="1"/>
</dbReference>
<dbReference type="PIRSF" id="PIRSF000157">
    <property type="entry name" value="Oxoglu_dh_E1"/>
    <property type="match status" value="1"/>
</dbReference>
<dbReference type="SMART" id="SM00861">
    <property type="entry name" value="Transket_pyr"/>
    <property type="match status" value="1"/>
</dbReference>
<dbReference type="SUPFAM" id="SSF52518">
    <property type="entry name" value="Thiamin diphosphate-binding fold (THDP-binding)"/>
    <property type="match status" value="2"/>
</dbReference>
<organism>
    <name type="scientific">Staphylococcus aureus (strain Mu3 / ATCC 700698)</name>
    <dbReference type="NCBI Taxonomy" id="418127"/>
    <lineage>
        <taxon>Bacteria</taxon>
        <taxon>Bacillati</taxon>
        <taxon>Bacillota</taxon>
        <taxon>Bacilli</taxon>
        <taxon>Bacillales</taxon>
        <taxon>Staphylococcaceae</taxon>
        <taxon>Staphylococcus</taxon>
    </lineage>
</organism>
<keyword id="KW-0324">Glycolysis</keyword>
<keyword id="KW-0560">Oxidoreductase</keyword>
<keyword id="KW-0786">Thiamine pyrophosphate</keyword>